<dbReference type="EC" id="6.1.1.7" evidence="1"/>
<dbReference type="EMBL" id="CP000866">
    <property type="protein sequence ID" value="ABX12264.1"/>
    <property type="molecule type" value="Genomic_DNA"/>
</dbReference>
<dbReference type="RefSeq" id="WP_012214751.1">
    <property type="nucleotide sequence ID" value="NC_010085.1"/>
</dbReference>
<dbReference type="SMR" id="A9A565"/>
<dbReference type="FunCoup" id="A9A565">
    <property type="interactions" value="169"/>
</dbReference>
<dbReference type="STRING" id="436308.Nmar_0368"/>
<dbReference type="EnsemblBacteria" id="ABX12264">
    <property type="protein sequence ID" value="ABX12264"/>
    <property type="gene ID" value="Nmar_0368"/>
</dbReference>
<dbReference type="GeneID" id="5772953"/>
<dbReference type="KEGG" id="nmr:Nmar_0368"/>
<dbReference type="eggNOG" id="arCOG01255">
    <property type="taxonomic scope" value="Archaea"/>
</dbReference>
<dbReference type="HOGENOM" id="CLU_004485_4_0_2"/>
<dbReference type="InParanoid" id="A9A565"/>
<dbReference type="OrthoDB" id="7506at2157"/>
<dbReference type="PhylomeDB" id="A9A565"/>
<dbReference type="Proteomes" id="UP000000792">
    <property type="component" value="Chromosome"/>
</dbReference>
<dbReference type="GO" id="GO:0005737">
    <property type="term" value="C:cytoplasm"/>
    <property type="evidence" value="ECO:0007669"/>
    <property type="project" value="UniProtKB-SubCell"/>
</dbReference>
<dbReference type="GO" id="GO:0004813">
    <property type="term" value="F:alanine-tRNA ligase activity"/>
    <property type="evidence" value="ECO:0000318"/>
    <property type="project" value="GO_Central"/>
</dbReference>
<dbReference type="GO" id="GO:0002161">
    <property type="term" value="F:aminoacyl-tRNA deacylase activity"/>
    <property type="evidence" value="ECO:0000318"/>
    <property type="project" value="GO_Central"/>
</dbReference>
<dbReference type="GO" id="GO:0005524">
    <property type="term" value="F:ATP binding"/>
    <property type="evidence" value="ECO:0007669"/>
    <property type="project" value="UniProtKB-UniRule"/>
</dbReference>
<dbReference type="GO" id="GO:0000049">
    <property type="term" value="F:tRNA binding"/>
    <property type="evidence" value="ECO:0007669"/>
    <property type="project" value="UniProtKB-KW"/>
</dbReference>
<dbReference type="GO" id="GO:0008270">
    <property type="term" value="F:zinc ion binding"/>
    <property type="evidence" value="ECO:0007669"/>
    <property type="project" value="UniProtKB-UniRule"/>
</dbReference>
<dbReference type="GO" id="GO:0006419">
    <property type="term" value="P:alanyl-tRNA aminoacylation"/>
    <property type="evidence" value="ECO:0000318"/>
    <property type="project" value="GO_Central"/>
</dbReference>
<dbReference type="FunFam" id="3.10.310.40:FF:000001">
    <property type="entry name" value="Alanine--tRNA ligase"/>
    <property type="match status" value="1"/>
</dbReference>
<dbReference type="FunFam" id="3.30.54.20:FF:000008">
    <property type="entry name" value="Alanine--tRNA ligase"/>
    <property type="match status" value="1"/>
</dbReference>
<dbReference type="FunFam" id="3.30.980.10:FF:000004">
    <property type="entry name" value="Alanine--tRNA ligase, cytoplasmic"/>
    <property type="match status" value="1"/>
</dbReference>
<dbReference type="Gene3D" id="2.40.30.130">
    <property type="match status" value="1"/>
</dbReference>
<dbReference type="Gene3D" id="3.10.310.40">
    <property type="match status" value="1"/>
</dbReference>
<dbReference type="Gene3D" id="3.30.54.20">
    <property type="match status" value="1"/>
</dbReference>
<dbReference type="Gene3D" id="3.30.930.10">
    <property type="entry name" value="Bira Bifunctional Protein, Domain 2"/>
    <property type="match status" value="1"/>
</dbReference>
<dbReference type="Gene3D" id="3.30.980.10">
    <property type="entry name" value="Threonyl-trna Synthetase, Chain A, domain 2"/>
    <property type="match status" value="1"/>
</dbReference>
<dbReference type="HAMAP" id="MF_00036_A">
    <property type="entry name" value="Ala_tRNA_synth_A"/>
    <property type="match status" value="1"/>
</dbReference>
<dbReference type="InterPro" id="IPR045864">
    <property type="entry name" value="aa-tRNA-synth_II/BPL/LPL"/>
</dbReference>
<dbReference type="InterPro" id="IPR002318">
    <property type="entry name" value="Ala-tRNA-lgiase_IIc"/>
</dbReference>
<dbReference type="InterPro" id="IPR018162">
    <property type="entry name" value="Ala-tRNA-ligase_IIc_anticod-bd"/>
</dbReference>
<dbReference type="InterPro" id="IPR018165">
    <property type="entry name" value="Ala-tRNA-synth_IIc_core"/>
</dbReference>
<dbReference type="InterPro" id="IPR018164">
    <property type="entry name" value="Ala-tRNA-synth_IIc_N"/>
</dbReference>
<dbReference type="InterPro" id="IPR022429">
    <property type="entry name" value="Ala-tRNA_lgiase_arc"/>
</dbReference>
<dbReference type="InterPro" id="IPR050058">
    <property type="entry name" value="Ala-tRNA_ligase"/>
</dbReference>
<dbReference type="InterPro" id="IPR003156">
    <property type="entry name" value="DHHA1_dom"/>
</dbReference>
<dbReference type="InterPro" id="IPR018163">
    <property type="entry name" value="Thr/Ala-tRNA-synth_IIc_edit"/>
</dbReference>
<dbReference type="InterPro" id="IPR009000">
    <property type="entry name" value="Transl_B-barrel_sf"/>
</dbReference>
<dbReference type="InterPro" id="IPR012947">
    <property type="entry name" value="tRNA_SAD"/>
</dbReference>
<dbReference type="NCBIfam" id="TIGR03683">
    <property type="entry name" value="A-tRNA_syn_arch"/>
    <property type="match status" value="1"/>
</dbReference>
<dbReference type="NCBIfam" id="TIGR00344">
    <property type="entry name" value="alaS"/>
    <property type="match status" value="1"/>
</dbReference>
<dbReference type="PANTHER" id="PTHR11777:SF9">
    <property type="entry name" value="ALANINE--TRNA LIGASE, CYTOPLASMIC"/>
    <property type="match status" value="1"/>
</dbReference>
<dbReference type="PANTHER" id="PTHR11777">
    <property type="entry name" value="ALANYL-TRNA SYNTHETASE"/>
    <property type="match status" value="1"/>
</dbReference>
<dbReference type="Pfam" id="PF02272">
    <property type="entry name" value="DHHA1"/>
    <property type="match status" value="1"/>
</dbReference>
<dbReference type="Pfam" id="PF01411">
    <property type="entry name" value="tRNA-synt_2c"/>
    <property type="match status" value="1"/>
</dbReference>
<dbReference type="Pfam" id="PF07973">
    <property type="entry name" value="tRNA_SAD"/>
    <property type="match status" value="1"/>
</dbReference>
<dbReference type="PRINTS" id="PR00980">
    <property type="entry name" value="TRNASYNTHALA"/>
</dbReference>
<dbReference type="SMART" id="SM00863">
    <property type="entry name" value="tRNA_SAD"/>
    <property type="match status" value="1"/>
</dbReference>
<dbReference type="SUPFAM" id="SSF55681">
    <property type="entry name" value="Class II aaRS and biotin synthetases"/>
    <property type="match status" value="1"/>
</dbReference>
<dbReference type="SUPFAM" id="SSF101353">
    <property type="entry name" value="Putative anticodon-binding domain of alanyl-tRNA synthetase (AlaRS)"/>
    <property type="match status" value="1"/>
</dbReference>
<dbReference type="SUPFAM" id="SSF55186">
    <property type="entry name" value="ThrRS/AlaRS common domain"/>
    <property type="match status" value="1"/>
</dbReference>
<dbReference type="SUPFAM" id="SSF50447">
    <property type="entry name" value="Translation proteins"/>
    <property type="match status" value="1"/>
</dbReference>
<dbReference type="PROSITE" id="PS50860">
    <property type="entry name" value="AA_TRNA_LIGASE_II_ALA"/>
    <property type="match status" value="1"/>
</dbReference>
<comment type="function">
    <text evidence="1">Catalyzes the attachment of alanine to tRNA(Ala) in a two-step reaction: alanine is first activated by ATP to form Ala-AMP and then transferred to the acceptor end of tRNA(Ala). Also edits incorrectly charged Ser-tRNA(Ala) and Gly-tRNA(Ala) via its editing domain.</text>
</comment>
<comment type="catalytic activity">
    <reaction evidence="1">
        <text>tRNA(Ala) + L-alanine + ATP = L-alanyl-tRNA(Ala) + AMP + diphosphate</text>
        <dbReference type="Rhea" id="RHEA:12540"/>
        <dbReference type="Rhea" id="RHEA-COMP:9657"/>
        <dbReference type="Rhea" id="RHEA-COMP:9923"/>
        <dbReference type="ChEBI" id="CHEBI:30616"/>
        <dbReference type="ChEBI" id="CHEBI:33019"/>
        <dbReference type="ChEBI" id="CHEBI:57972"/>
        <dbReference type="ChEBI" id="CHEBI:78442"/>
        <dbReference type="ChEBI" id="CHEBI:78497"/>
        <dbReference type="ChEBI" id="CHEBI:456215"/>
        <dbReference type="EC" id="6.1.1.7"/>
    </reaction>
</comment>
<comment type="cofactor">
    <cofactor evidence="1">
        <name>Zn(2+)</name>
        <dbReference type="ChEBI" id="CHEBI:29105"/>
    </cofactor>
    <text evidence="1">Binds 1 zinc ion per subunit.</text>
</comment>
<comment type="subcellular location">
    <subcellularLocation>
        <location evidence="1">Cytoplasm</location>
    </subcellularLocation>
</comment>
<comment type="domain">
    <text evidence="1">Consists of three domains; the N-terminal catalytic domain, the editing domain and the C-terminal C-Ala domain. The editing domain removes incorrectly charged amino acids, while the C-Ala domain, along with tRNA(Ala), serves as a bridge to cooperatively bring together the editing and aminoacylation centers thus stimulating deacylation of misacylated tRNAs.</text>
</comment>
<comment type="similarity">
    <text evidence="1">Belongs to the class-II aminoacyl-tRNA synthetase family.</text>
</comment>
<keyword id="KW-0030">Aminoacyl-tRNA synthetase</keyword>
<keyword id="KW-0067">ATP-binding</keyword>
<keyword id="KW-0963">Cytoplasm</keyword>
<keyword id="KW-0436">Ligase</keyword>
<keyword id="KW-0479">Metal-binding</keyword>
<keyword id="KW-0547">Nucleotide-binding</keyword>
<keyword id="KW-0648">Protein biosynthesis</keyword>
<keyword id="KW-1185">Reference proteome</keyword>
<keyword id="KW-0694">RNA-binding</keyword>
<keyword id="KW-0820">tRNA-binding</keyword>
<keyword id="KW-0862">Zinc</keyword>
<name>SYA_NITMS</name>
<proteinExistence type="inferred from homology"/>
<accession>A9A565</accession>
<gene>
    <name evidence="1" type="primary">alaS</name>
    <name type="ordered locus">Nmar_0368</name>
</gene>
<sequence>MDKKEILKEFSADPDKYYNVKLFQEQGFIRKSCAKCGRFFWTLNADRDLCPDDGLDTYSFIGEPPTSKRFDYTQSWKQVEEFFVKNNHTSVSRYPVVCRWRDDLYFTIASVVDFQRVMGSKVVFEFPANPLVVPQTCLRFKDLENVGVTGRHFSSFCMIGQHSVPDLGGYWKDECVDLDYRLLTEQFGINKDEVVFVEDVWAGGGSFGPSLEYFVQGLELGNAVFTEFQGELGKHTTLDQRVIDMGAGLERFAWITMGTPTAYDCCFGPINEKLFGTIGIDSDSEILRKYFTEIAKEIDHYDDLNQVRRLAVKNAGITDEQMQKMITPLEGMYLIADHLRTLIFAITDGALPSNVGGGYNLRMMLRRINATISKLNLKLNIDDLIDLHVDYLKDTYPELDEKRDDVKSILKLESARYEESKVHMKKKADKIKEKGAPSVDELITYYESDGITPEYLKEVDAISEIPSSFYSKLSDLHQSDKKKAIAELPLEGLPETETLFYQDDPMEFSAKVLKVIDDMIVLDRTSFYARGGGQEPDFGSIAGFKVINVDKHADIIVHQLEGGVPKEGETVSCKVDETRRSNITKNHTSTHIINASSRKVLGSWIWQHSAFKDDDHARLDITHHSSLSNDEVQKIEDEANDMIKKNYPVKINYYDRGTAEQKYGFRIYQGGVVPVKSVRIVSIEDKDIEACGGTHVKKTGDIELIKITKTKRIQDGVVRLEFVSGPNAFEYEKQQEQESKRKAEEAVAKEQLEKQREENKSKAREKIPVLLEKVLAGEDVESDGINTKGKLCFTASSDYDDYFHQNFGKKLVGKDSTAAFCGVFEAGPTIRVMVFSGEQSGVNAGEIAKKIASILGGSGGGDAKFAQGGGKDTSKKDEAISKAKSMILG</sequence>
<feature type="chain" id="PRO_0000347889" description="Alanine--tRNA ligase">
    <location>
        <begin position="1"/>
        <end position="889"/>
    </location>
</feature>
<feature type="region of interest" description="Disordered" evidence="2">
    <location>
        <begin position="734"/>
        <end position="760"/>
    </location>
</feature>
<feature type="region of interest" description="Disordered" evidence="2">
    <location>
        <begin position="866"/>
        <end position="889"/>
    </location>
</feature>
<feature type="compositionally biased region" description="Basic and acidic residues" evidence="2">
    <location>
        <begin position="872"/>
        <end position="881"/>
    </location>
</feature>
<feature type="binding site" evidence="1">
    <location>
        <position position="587"/>
    </location>
    <ligand>
        <name>Zn(2+)</name>
        <dbReference type="ChEBI" id="CHEBI:29105"/>
    </ligand>
</feature>
<feature type="binding site" evidence="1">
    <location>
        <position position="591"/>
    </location>
    <ligand>
        <name>Zn(2+)</name>
        <dbReference type="ChEBI" id="CHEBI:29105"/>
    </ligand>
</feature>
<feature type="binding site" evidence="1">
    <location>
        <position position="691"/>
    </location>
    <ligand>
        <name>Zn(2+)</name>
        <dbReference type="ChEBI" id="CHEBI:29105"/>
    </ligand>
</feature>
<feature type="binding site" evidence="1">
    <location>
        <position position="695"/>
    </location>
    <ligand>
        <name>Zn(2+)</name>
        <dbReference type="ChEBI" id="CHEBI:29105"/>
    </ligand>
</feature>
<reference key="1">
    <citation type="journal article" date="2010" name="Proc. Natl. Acad. Sci. U.S.A.">
        <title>Nitrosopumilus maritimus genome reveals unique mechanisms for nitrification and autotrophy in globally distributed marine crenarchaea.</title>
        <authorList>
            <person name="Walker C.B."/>
            <person name="de la Torre J.R."/>
            <person name="Klotz M.G."/>
            <person name="Urakawa H."/>
            <person name="Pinel N."/>
            <person name="Arp D.J."/>
            <person name="Brochier-Armanet C."/>
            <person name="Chain P.S."/>
            <person name="Chan P.P."/>
            <person name="Gollabgir A."/>
            <person name="Hemp J."/>
            <person name="Hugler M."/>
            <person name="Karr E.A."/>
            <person name="Konneke M."/>
            <person name="Shin M."/>
            <person name="Lawton T.J."/>
            <person name="Lowe T."/>
            <person name="Martens-Habbena W."/>
            <person name="Sayavedra-Soto L.A."/>
            <person name="Lang D."/>
            <person name="Sievert S.M."/>
            <person name="Rosenzweig A.C."/>
            <person name="Manning G."/>
            <person name="Stahl D.A."/>
        </authorList>
    </citation>
    <scope>NUCLEOTIDE SEQUENCE [LARGE SCALE GENOMIC DNA]</scope>
    <source>
        <strain>SCM1</strain>
    </source>
</reference>
<evidence type="ECO:0000255" key="1">
    <source>
        <dbReference type="HAMAP-Rule" id="MF_00036"/>
    </source>
</evidence>
<evidence type="ECO:0000256" key="2">
    <source>
        <dbReference type="SAM" id="MobiDB-lite"/>
    </source>
</evidence>
<protein>
    <recommendedName>
        <fullName evidence="1">Alanine--tRNA ligase</fullName>
        <ecNumber evidence="1">6.1.1.7</ecNumber>
    </recommendedName>
    <alternativeName>
        <fullName evidence="1">Alanyl-tRNA synthetase</fullName>
        <shortName evidence="1">AlaRS</shortName>
    </alternativeName>
</protein>
<organism>
    <name type="scientific">Nitrosopumilus maritimus (strain SCM1)</name>
    <dbReference type="NCBI Taxonomy" id="436308"/>
    <lineage>
        <taxon>Archaea</taxon>
        <taxon>Nitrososphaerota</taxon>
        <taxon>Nitrososphaeria</taxon>
        <taxon>Nitrosopumilales</taxon>
        <taxon>Nitrosopumilaceae</taxon>
        <taxon>Nitrosopumilus</taxon>
    </lineage>
</organism>